<accession>Q974Z9</accession>
<accession>F9VN17</accession>
<comment type="function">
    <text evidence="1">Seems to be required for maximal rate of protein biosynthesis. Enhances ribosome dissociation into subunits and stabilizes the binding of the initiator Met-tRNA(I) to 40 S ribosomal subunits (By similarity).</text>
</comment>
<comment type="similarity">
    <text evidence="2">Belongs to the eIF-1A family.</text>
</comment>
<organism>
    <name type="scientific">Sulfurisphaera tokodaii (strain DSM 16993 / JCM 10545 / NBRC 100140 / 7)</name>
    <name type="common">Sulfolobus tokodaii</name>
    <dbReference type="NCBI Taxonomy" id="273063"/>
    <lineage>
        <taxon>Archaea</taxon>
        <taxon>Thermoproteota</taxon>
        <taxon>Thermoprotei</taxon>
        <taxon>Sulfolobales</taxon>
        <taxon>Sulfolobaceae</taxon>
        <taxon>Sulfurisphaera</taxon>
    </lineage>
</organism>
<reference key="1">
    <citation type="journal article" date="2001" name="DNA Res.">
        <title>Complete genome sequence of an aerobic thermoacidophilic Crenarchaeon, Sulfolobus tokodaii strain7.</title>
        <authorList>
            <person name="Kawarabayasi Y."/>
            <person name="Hino Y."/>
            <person name="Horikawa H."/>
            <person name="Jin-no K."/>
            <person name="Takahashi M."/>
            <person name="Sekine M."/>
            <person name="Baba S."/>
            <person name="Ankai A."/>
            <person name="Kosugi H."/>
            <person name="Hosoyama A."/>
            <person name="Fukui S."/>
            <person name="Nagai Y."/>
            <person name="Nishijima K."/>
            <person name="Otsuka R."/>
            <person name="Nakazawa H."/>
            <person name="Takamiya M."/>
            <person name="Kato Y."/>
            <person name="Yoshizawa T."/>
            <person name="Tanaka T."/>
            <person name="Kudoh Y."/>
            <person name="Yamazaki J."/>
            <person name="Kushida N."/>
            <person name="Oguchi A."/>
            <person name="Aoki K."/>
            <person name="Masuda S."/>
            <person name="Yanagii M."/>
            <person name="Nishimura M."/>
            <person name="Yamagishi A."/>
            <person name="Oshima T."/>
            <person name="Kikuchi H."/>
        </authorList>
    </citation>
    <scope>NUCLEOTIDE SEQUENCE [LARGE SCALE GENOMIC DNA]</scope>
    <source>
        <strain>DSM 16993 / JCM 10545 / NBRC 100140 / 7</strain>
    </source>
</reference>
<protein>
    <recommendedName>
        <fullName>Translation initiation factor 1A</fullName>
        <shortName>aIF-1A</shortName>
    </recommendedName>
</protein>
<name>IF1A_SULTO</name>
<proteinExistence type="inferred from homology"/>
<dbReference type="EMBL" id="BA000023">
    <property type="protein sequence ID" value="BAK54314.1"/>
    <property type="molecule type" value="Genomic_DNA"/>
</dbReference>
<dbReference type="RefSeq" id="WP_052846355.1">
    <property type="nucleotide sequence ID" value="NC_003106.2"/>
</dbReference>
<dbReference type="SMR" id="Q974Z9"/>
<dbReference type="STRING" id="273063.STK_05135"/>
<dbReference type="KEGG" id="sto:STK_05135"/>
<dbReference type="PATRIC" id="fig|273063.9.peg.591"/>
<dbReference type="eggNOG" id="arCOG01179">
    <property type="taxonomic scope" value="Archaea"/>
</dbReference>
<dbReference type="OrthoDB" id="2586at2157"/>
<dbReference type="Proteomes" id="UP000001015">
    <property type="component" value="Chromosome"/>
</dbReference>
<dbReference type="GO" id="GO:0003723">
    <property type="term" value="F:RNA binding"/>
    <property type="evidence" value="ECO:0007669"/>
    <property type="project" value="InterPro"/>
</dbReference>
<dbReference type="GO" id="GO:0003743">
    <property type="term" value="F:translation initiation factor activity"/>
    <property type="evidence" value="ECO:0007669"/>
    <property type="project" value="UniProtKB-UniRule"/>
</dbReference>
<dbReference type="CDD" id="cd05793">
    <property type="entry name" value="S1_IF1A"/>
    <property type="match status" value="1"/>
</dbReference>
<dbReference type="Gene3D" id="2.40.50.140">
    <property type="entry name" value="Nucleic acid-binding proteins"/>
    <property type="match status" value="1"/>
</dbReference>
<dbReference type="HAMAP" id="MF_00216">
    <property type="entry name" value="aIF_1A"/>
    <property type="match status" value="1"/>
</dbReference>
<dbReference type="InterPro" id="IPR012340">
    <property type="entry name" value="NA-bd_OB-fold"/>
</dbReference>
<dbReference type="InterPro" id="IPR006196">
    <property type="entry name" value="RNA-binding_domain_S1_IF1"/>
</dbReference>
<dbReference type="InterPro" id="IPR001253">
    <property type="entry name" value="TIF_eIF-1A"/>
</dbReference>
<dbReference type="InterPro" id="IPR018104">
    <property type="entry name" value="TIF_eIF-1A_CS"/>
</dbReference>
<dbReference type="NCBIfam" id="TIGR00523">
    <property type="entry name" value="eIF-1A"/>
    <property type="match status" value="1"/>
</dbReference>
<dbReference type="NCBIfam" id="NF003082">
    <property type="entry name" value="PRK04012.1-1"/>
    <property type="match status" value="1"/>
</dbReference>
<dbReference type="NCBIfam" id="NF003084">
    <property type="entry name" value="PRK04012.1-3"/>
    <property type="match status" value="1"/>
</dbReference>
<dbReference type="NCBIfam" id="NF003085">
    <property type="entry name" value="PRK04012.1-5"/>
    <property type="match status" value="1"/>
</dbReference>
<dbReference type="PANTHER" id="PTHR21668">
    <property type="entry name" value="EIF-1A"/>
    <property type="match status" value="1"/>
</dbReference>
<dbReference type="Pfam" id="PF01176">
    <property type="entry name" value="eIF-1a"/>
    <property type="match status" value="1"/>
</dbReference>
<dbReference type="SMART" id="SM00652">
    <property type="entry name" value="eIF1a"/>
    <property type="match status" value="1"/>
</dbReference>
<dbReference type="SUPFAM" id="SSF50249">
    <property type="entry name" value="Nucleic acid-binding proteins"/>
    <property type="match status" value="1"/>
</dbReference>
<dbReference type="PROSITE" id="PS01262">
    <property type="entry name" value="IF1A"/>
    <property type="match status" value="1"/>
</dbReference>
<dbReference type="PROSITE" id="PS50832">
    <property type="entry name" value="S1_IF1_TYPE"/>
    <property type="match status" value="1"/>
</dbReference>
<sequence>MAKKKTNEQPSVKEVPKPAEGEVICVVKKMLGAEHVQVICLDGKERLGRIPGKMKKKMWVKEGDVVLAAPWDFQPNKCDIIYKYSESEVRRLEEEQVVSADIIEQLRG</sequence>
<feature type="chain" id="PRO_0000145135" description="Translation initiation factor 1A">
    <location>
        <begin position="1"/>
        <end position="108"/>
    </location>
</feature>
<feature type="domain" description="S1-like">
    <location>
        <begin position="11"/>
        <end position="85"/>
    </location>
</feature>
<gene>
    <name type="primary">eIF1A</name>
    <name type="ordered locus">STK_05135</name>
    <name type="ORF">STS070</name>
</gene>
<keyword id="KW-0396">Initiation factor</keyword>
<keyword id="KW-0648">Protein biosynthesis</keyword>
<keyword id="KW-1185">Reference proteome</keyword>
<evidence type="ECO:0000250" key="1"/>
<evidence type="ECO:0000305" key="2"/>